<proteinExistence type="predicted"/>
<feature type="chain" id="PRO_0000066335" description="Protein NorD">
    <location>
        <begin position="1"/>
        <end position="612"/>
    </location>
</feature>
<feature type="domain" description="VWFA" evidence="1">
    <location>
        <begin position="420"/>
        <end position="609"/>
    </location>
</feature>
<feature type="region of interest" description="Disordered" evidence="2">
    <location>
        <begin position="220"/>
        <end position="246"/>
    </location>
</feature>
<gene>
    <name type="primary">norD</name>
</gene>
<dbReference type="EMBL" id="X53676">
    <property type="protein sequence ID" value="CAG34196.1"/>
    <property type="molecule type" value="Genomic_DNA"/>
</dbReference>
<dbReference type="PIR" id="S41118">
    <property type="entry name" value="S41118"/>
</dbReference>
<dbReference type="CDD" id="cd01454">
    <property type="entry name" value="vWA_norD_type"/>
    <property type="match status" value="1"/>
</dbReference>
<dbReference type="Gene3D" id="3.40.50.410">
    <property type="entry name" value="von Willebrand factor, type A domain"/>
    <property type="match status" value="1"/>
</dbReference>
<dbReference type="InterPro" id="IPR051928">
    <property type="entry name" value="NorD/CobT"/>
</dbReference>
<dbReference type="InterPro" id="IPR002035">
    <property type="entry name" value="VWF_A"/>
</dbReference>
<dbReference type="InterPro" id="IPR036465">
    <property type="entry name" value="vWFA_dom_sf"/>
</dbReference>
<dbReference type="PANTHER" id="PTHR41248">
    <property type="entry name" value="NORD PROTEIN"/>
    <property type="match status" value="1"/>
</dbReference>
<dbReference type="PANTHER" id="PTHR41248:SF1">
    <property type="entry name" value="NORD PROTEIN"/>
    <property type="match status" value="1"/>
</dbReference>
<dbReference type="Pfam" id="PF00092">
    <property type="entry name" value="VWA"/>
    <property type="match status" value="1"/>
</dbReference>
<dbReference type="SMART" id="SM00327">
    <property type="entry name" value="VWA"/>
    <property type="match status" value="1"/>
</dbReference>
<dbReference type="SUPFAM" id="SSF53300">
    <property type="entry name" value="vWA-like"/>
    <property type="match status" value="1"/>
</dbReference>
<dbReference type="PROSITE" id="PS50234">
    <property type="entry name" value="VWFA"/>
    <property type="match status" value="1"/>
</dbReference>
<protein>
    <recommendedName>
        <fullName>Protein NorD</fullName>
    </recommendedName>
</protein>
<sequence>MAFTIEVEEWVGSVWHRFITRRASPDFPEARVDLESMQRSLSLMFRAMGGASGVGVEAASARDLVLRRNLLQQVAGTCMQLPVAWCDSSNLRLPQSLAVYPEVSLNQDLYRWLALIAAQAGQMRHWARDNQRWTQALLEQFPAMRPRYQRLVEAHLQLRPDPKQLPKAEAALEAALCQALREPGSVSQFPRCERAPWPLSLWLYPAENLGEPQAVYRVEEGEGDLETPPSGQSRQRNGARRVDDSSSKGGLLLFRLENLFSWSEHVELDRCDDDTEDLDAARVRGPRRTGSVAPRMRQGGGLKLDLDLPASDFDDVPLGEGIKLPEWNYRKQCLQKDFVNLQMMLPCGSEPKPLPLRLSPLARRLRRQFEHLRNDRQWLRQQPQGSELDMQAWLDFHVERQNGQCAERGLFMEQRQNRRDLACLLLADLSMSTDAHLDNEHRVIDVVIDSLLLFGERLSAVGDPFALYGFSSLRRQQVRMQELKSFRQPYGDETRGRIQALKPGYYTRMGAAIRQATELLGNCKQRRKLLLLVTDGKPNDLDLYEGRYGVEDTRQAVMEARRQGLLPFCITIDREAGDYLPYMFGANGYTLIKEPQQSAFPPAAAVQATDPA</sequence>
<name>NORD_STUST</name>
<evidence type="ECO:0000255" key="1">
    <source>
        <dbReference type="PROSITE-ProRule" id="PRU00219"/>
    </source>
</evidence>
<evidence type="ECO:0000256" key="2">
    <source>
        <dbReference type="SAM" id="MobiDB-lite"/>
    </source>
</evidence>
<comment type="function">
    <text>Component of the anaerobic respiratory chain that transforms nitrate to dinitrogen (denitrification).</text>
</comment>
<accession>Q52528</accession>
<accession>Q6KAW3</accession>
<reference key="1">
    <citation type="journal article" date="2001" name="J. Bacteriol.">
        <title>Nitric oxide signaling and transcriptional control of denitrification genes in Pseudomonas stutzeri.</title>
        <authorList>
            <person name="Vollack K.-U."/>
            <person name="Zumft W.G."/>
        </authorList>
    </citation>
    <scope>NUCLEOTIDE SEQUENCE [GENOMIC DNA]</scope>
    <source>
        <strain>ATCC 14405 / JCM 20778 / CIP 107696 / IAM 12931 / LMG 2243 / NCIMB 568 / Baumann 218 / ZoBell 632</strain>
    </source>
</reference>
<reference key="2">
    <citation type="journal article" date="1994" name="Eur. J. Biochem.">
        <title>Nitric oxide reductase from Pseudomonas stutzeri. Primary structure and gene organization of a novel bacterial cytochrome bc complex.</title>
        <authorList>
            <person name="Zumft W.G."/>
            <person name="Braun C."/>
            <person name="Cuypers H."/>
        </authorList>
    </citation>
    <scope>NUCLEOTIDE SEQUENCE [GENOMIC DNA] OF 1-115</scope>
    <source>
        <strain>ATCC 14405 / JCM 20778 / CIP 107696 / IAM 12931 / LMG 2243 / NCIMB 568 / Baumann 218 / ZoBell 632</strain>
    </source>
</reference>
<organism>
    <name type="scientific">Stutzerimonas stutzeri</name>
    <name type="common">Pseudomonas stutzeri</name>
    <dbReference type="NCBI Taxonomy" id="316"/>
    <lineage>
        <taxon>Bacteria</taxon>
        <taxon>Pseudomonadati</taxon>
        <taxon>Pseudomonadota</taxon>
        <taxon>Gammaproteobacteria</taxon>
        <taxon>Pseudomonadales</taxon>
        <taxon>Pseudomonadaceae</taxon>
        <taxon>Stutzerimonas</taxon>
    </lineage>
</organism>